<accession>B4EZT7</accession>
<name>NDK_PROMH</name>
<organism>
    <name type="scientific">Proteus mirabilis (strain HI4320)</name>
    <dbReference type="NCBI Taxonomy" id="529507"/>
    <lineage>
        <taxon>Bacteria</taxon>
        <taxon>Pseudomonadati</taxon>
        <taxon>Pseudomonadota</taxon>
        <taxon>Gammaproteobacteria</taxon>
        <taxon>Enterobacterales</taxon>
        <taxon>Morganellaceae</taxon>
        <taxon>Proteus</taxon>
    </lineage>
</organism>
<gene>
    <name evidence="1" type="primary">ndk</name>
    <name type="ordered locus">PMI1849</name>
</gene>
<dbReference type="EC" id="2.7.4.6" evidence="1"/>
<dbReference type="EMBL" id="AM942759">
    <property type="protein sequence ID" value="CAR43833.1"/>
    <property type="molecule type" value="Genomic_DNA"/>
</dbReference>
<dbReference type="RefSeq" id="WP_004243827.1">
    <property type="nucleotide sequence ID" value="NC_010554.1"/>
</dbReference>
<dbReference type="SMR" id="B4EZT7"/>
<dbReference type="EnsemblBacteria" id="CAR43833">
    <property type="protein sequence ID" value="CAR43833"/>
    <property type="gene ID" value="PMI1849"/>
</dbReference>
<dbReference type="GeneID" id="6802486"/>
<dbReference type="KEGG" id="pmr:PMI1849"/>
<dbReference type="eggNOG" id="COG0105">
    <property type="taxonomic scope" value="Bacteria"/>
</dbReference>
<dbReference type="HOGENOM" id="CLU_060216_8_1_6"/>
<dbReference type="Proteomes" id="UP000008319">
    <property type="component" value="Chromosome"/>
</dbReference>
<dbReference type="GO" id="GO:0005737">
    <property type="term" value="C:cytoplasm"/>
    <property type="evidence" value="ECO:0007669"/>
    <property type="project" value="UniProtKB-SubCell"/>
</dbReference>
<dbReference type="GO" id="GO:0005524">
    <property type="term" value="F:ATP binding"/>
    <property type="evidence" value="ECO:0007669"/>
    <property type="project" value="UniProtKB-UniRule"/>
</dbReference>
<dbReference type="GO" id="GO:0046872">
    <property type="term" value="F:metal ion binding"/>
    <property type="evidence" value="ECO:0007669"/>
    <property type="project" value="UniProtKB-KW"/>
</dbReference>
<dbReference type="GO" id="GO:0004550">
    <property type="term" value="F:nucleoside diphosphate kinase activity"/>
    <property type="evidence" value="ECO:0007669"/>
    <property type="project" value="UniProtKB-UniRule"/>
</dbReference>
<dbReference type="GO" id="GO:0006241">
    <property type="term" value="P:CTP biosynthetic process"/>
    <property type="evidence" value="ECO:0007669"/>
    <property type="project" value="UniProtKB-UniRule"/>
</dbReference>
<dbReference type="GO" id="GO:0006183">
    <property type="term" value="P:GTP biosynthetic process"/>
    <property type="evidence" value="ECO:0007669"/>
    <property type="project" value="UniProtKB-UniRule"/>
</dbReference>
<dbReference type="GO" id="GO:0006228">
    <property type="term" value="P:UTP biosynthetic process"/>
    <property type="evidence" value="ECO:0007669"/>
    <property type="project" value="UniProtKB-UniRule"/>
</dbReference>
<dbReference type="CDD" id="cd04413">
    <property type="entry name" value="NDPk_I"/>
    <property type="match status" value="1"/>
</dbReference>
<dbReference type="FunFam" id="3.30.70.141:FF:000001">
    <property type="entry name" value="Nucleoside diphosphate kinase"/>
    <property type="match status" value="1"/>
</dbReference>
<dbReference type="Gene3D" id="3.30.70.141">
    <property type="entry name" value="Nucleoside diphosphate kinase-like domain"/>
    <property type="match status" value="1"/>
</dbReference>
<dbReference type="HAMAP" id="MF_00451">
    <property type="entry name" value="NDP_kinase"/>
    <property type="match status" value="1"/>
</dbReference>
<dbReference type="InterPro" id="IPR034907">
    <property type="entry name" value="NDK-like_dom"/>
</dbReference>
<dbReference type="InterPro" id="IPR036850">
    <property type="entry name" value="NDK-like_dom_sf"/>
</dbReference>
<dbReference type="InterPro" id="IPR001564">
    <property type="entry name" value="Nucleoside_diP_kinase"/>
</dbReference>
<dbReference type="InterPro" id="IPR023005">
    <property type="entry name" value="Nucleoside_diP_kinase_AS"/>
</dbReference>
<dbReference type="NCBIfam" id="NF001908">
    <property type="entry name" value="PRK00668.1"/>
    <property type="match status" value="1"/>
</dbReference>
<dbReference type="PANTHER" id="PTHR46161">
    <property type="entry name" value="NUCLEOSIDE DIPHOSPHATE KINASE"/>
    <property type="match status" value="1"/>
</dbReference>
<dbReference type="PANTHER" id="PTHR46161:SF3">
    <property type="entry name" value="NUCLEOSIDE DIPHOSPHATE KINASE DDB_G0292928-RELATED"/>
    <property type="match status" value="1"/>
</dbReference>
<dbReference type="Pfam" id="PF00334">
    <property type="entry name" value="NDK"/>
    <property type="match status" value="1"/>
</dbReference>
<dbReference type="PRINTS" id="PR01243">
    <property type="entry name" value="NUCDPKINASE"/>
</dbReference>
<dbReference type="SMART" id="SM00562">
    <property type="entry name" value="NDK"/>
    <property type="match status" value="1"/>
</dbReference>
<dbReference type="SUPFAM" id="SSF54919">
    <property type="entry name" value="Nucleoside diphosphate kinase, NDK"/>
    <property type="match status" value="1"/>
</dbReference>
<dbReference type="PROSITE" id="PS00469">
    <property type="entry name" value="NDPK"/>
    <property type="match status" value="1"/>
</dbReference>
<dbReference type="PROSITE" id="PS51374">
    <property type="entry name" value="NDPK_LIKE"/>
    <property type="match status" value="1"/>
</dbReference>
<feature type="chain" id="PRO_1000125001" description="Nucleoside diphosphate kinase">
    <location>
        <begin position="1"/>
        <end position="141"/>
    </location>
</feature>
<feature type="active site" description="Pros-phosphohistidine intermediate" evidence="1">
    <location>
        <position position="117"/>
    </location>
</feature>
<feature type="binding site" evidence="1">
    <location>
        <position position="11"/>
    </location>
    <ligand>
        <name>ATP</name>
        <dbReference type="ChEBI" id="CHEBI:30616"/>
    </ligand>
</feature>
<feature type="binding site" evidence="1">
    <location>
        <position position="59"/>
    </location>
    <ligand>
        <name>ATP</name>
        <dbReference type="ChEBI" id="CHEBI:30616"/>
    </ligand>
</feature>
<feature type="binding site" evidence="1">
    <location>
        <position position="87"/>
    </location>
    <ligand>
        <name>ATP</name>
        <dbReference type="ChEBI" id="CHEBI:30616"/>
    </ligand>
</feature>
<feature type="binding site" evidence="1">
    <location>
        <position position="93"/>
    </location>
    <ligand>
        <name>ATP</name>
        <dbReference type="ChEBI" id="CHEBI:30616"/>
    </ligand>
</feature>
<feature type="binding site" evidence="1">
    <location>
        <position position="104"/>
    </location>
    <ligand>
        <name>ATP</name>
        <dbReference type="ChEBI" id="CHEBI:30616"/>
    </ligand>
</feature>
<feature type="binding site" evidence="1">
    <location>
        <position position="114"/>
    </location>
    <ligand>
        <name>ATP</name>
        <dbReference type="ChEBI" id="CHEBI:30616"/>
    </ligand>
</feature>
<comment type="function">
    <text evidence="1">Major role in the synthesis of nucleoside triphosphates other than ATP. The ATP gamma phosphate is transferred to the NDP beta phosphate via a ping-pong mechanism, using a phosphorylated active-site intermediate.</text>
</comment>
<comment type="catalytic activity">
    <reaction evidence="1">
        <text>a 2'-deoxyribonucleoside 5'-diphosphate + ATP = a 2'-deoxyribonucleoside 5'-triphosphate + ADP</text>
        <dbReference type="Rhea" id="RHEA:44640"/>
        <dbReference type="ChEBI" id="CHEBI:30616"/>
        <dbReference type="ChEBI" id="CHEBI:61560"/>
        <dbReference type="ChEBI" id="CHEBI:73316"/>
        <dbReference type="ChEBI" id="CHEBI:456216"/>
        <dbReference type="EC" id="2.7.4.6"/>
    </reaction>
</comment>
<comment type="catalytic activity">
    <reaction evidence="1">
        <text>a ribonucleoside 5'-diphosphate + ATP = a ribonucleoside 5'-triphosphate + ADP</text>
        <dbReference type="Rhea" id="RHEA:18113"/>
        <dbReference type="ChEBI" id="CHEBI:30616"/>
        <dbReference type="ChEBI" id="CHEBI:57930"/>
        <dbReference type="ChEBI" id="CHEBI:61557"/>
        <dbReference type="ChEBI" id="CHEBI:456216"/>
        <dbReference type="EC" id="2.7.4.6"/>
    </reaction>
</comment>
<comment type="cofactor">
    <cofactor evidence="1">
        <name>Mg(2+)</name>
        <dbReference type="ChEBI" id="CHEBI:18420"/>
    </cofactor>
</comment>
<comment type="subunit">
    <text evidence="1">Homotetramer.</text>
</comment>
<comment type="subcellular location">
    <subcellularLocation>
        <location evidence="1">Cytoplasm</location>
    </subcellularLocation>
</comment>
<comment type="similarity">
    <text evidence="1">Belongs to the NDK family.</text>
</comment>
<reference key="1">
    <citation type="journal article" date="2008" name="J. Bacteriol.">
        <title>Complete genome sequence of uropathogenic Proteus mirabilis, a master of both adherence and motility.</title>
        <authorList>
            <person name="Pearson M.M."/>
            <person name="Sebaihia M."/>
            <person name="Churcher C."/>
            <person name="Quail M.A."/>
            <person name="Seshasayee A.S."/>
            <person name="Luscombe N.M."/>
            <person name="Abdellah Z."/>
            <person name="Arrosmith C."/>
            <person name="Atkin B."/>
            <person name="Chillingworth T."/>
            <person name="Hauser H."/>
            <person name="Jagels K."/>
            <person name="Moule S."/>
            <person name="Mungall K."/>
            <person name="Norbertczak H."/>
            <person name="Rabbinowitsch E."/>
            <person name="Walker D."/>
            <person name="Whithead S."/>
            <person name="Thomson N.R."/>
            <person name="Rather P.N."/>
            <person name="Parkhill J."/>
            <person name="Mobley H.L.T."/>
        </authorList>
    </citation>
    <scope>NUCLEOTIDE SEQUENCE [LARGE SCALE GENOMIC DNA]</scope>
    <source>
        <strain>HI4320</strain>
    </source>
</reference>
<sequence>MAIQRTFSIIKPNAVKKNVIGAIYNRFESAGFSIVAAKMLHLTREQAEGFYEEHKGRPFFDGLVEFMTSGPIMVQVLEGENAIQRHRDLMGATNPDNALAGTLRADYADSFTENAVHGSDSEASAAREIAYFFTENEICPR</sequence>
<protein>
    <recommendedName>
        <fullName evidence="1">Nucleoside diphosphate kinase</fullName>
        <shortName evidence="1">NDK</shortName>
        <shortName evidence="1">NDP kinase</shortName>
        <ecNumber evidence="1">2.7.4.6</ecNumber>
    </recommendedName>
    <alternativeName>
        <fullName evidence="1">Nucleoside-2-P kinase</fullName>
    </alternativeName>
</protein>
<proteinExistence type="inferred from homology"/>
<keyword id="KW-0067">ATP-binding</keyword>
<keyword id="KW-0963">Cytoplasm</keyword>
<keyword id="KW-0418">Kinase</keyword>
<keyword id="KW-0460">Magnesium</keyword>
<keyword id="KW-0479">Metal-binding</keyword>
<keyword id="KW-0546">Nucleotide metabolism</keyword>
<keyword id="KW-0547">Nucleotide-binding</keyword>
<keyword id="KW-0597">Phosphoprotein</keyword>
<keyword id="KW-1185">Reference proteome</keyword>
<keyword id="KW-0808">Transferase</keyword>
<evidence type="ECO:0000255" key="1">
    <source>
        <dbReference type="HAMAP-Rule" id="MF_00451"/>
    </source>
</evidence>